<organism>
    <name type="scientific">Staphylococcus aureus (strain JH9)</name>
    <dbReference type="NCBI Taxonomy" id="359786"/>
    <lineage>
        <taxon>Bacteria</taxon>
        <taxon>Bacillati</taxon>
        <taxon>Bacillota</taxon>
        <taxon>Bacilli</taxon>
        <taxon>Bacillales</taxon>
        <taxon>Staphylococcaceae</taxon>
        <taxon>Staphylococcus</taxon>
    </lineage>
</organism>
<comment type="function">
    <text evidence="1">Produces ATP from ADP in the presence of a proton gradient across the membrane.</text>
</comment>
<comment type="subunit">
    <text evidence="1">F-type ATPases have 2 components, CF(1) - the catalytic core - and CF(0) - the membrane proton channel. CF(1) has five subunits: alpha(3), beta(3), gamma(1), delta(1), epsilon(1). CF(0) has three main subunits: a, b and c.</text>
</comment>
<comment type="subcellular location">
    <subcellularLocation>
        <location evidence="1">Cell membrane</location>
        <topology evidence="1">Peripheral membrane protein</topology>
    </subcellularLocation>
</comment>
<comment type="similarity">
    <text evidence="1">Belongs to the ATPase epsilon chain family.</text>
</comment>
<proteinExistence type="inferred from homology"/>
<protein>
    <recommendedName>
        <fullName evidence="1">ATP synthase epsilon chain</fullName>
    </recommendedName>
    <alternativeName>
        <fullName evidence="1">ATP synthase F1 sector epsilon subunit</fullName>
    </alternativeName>
    <alternativeName>
        <fullName evidence="1">F-ATPase epsilon subunit</fullName>
    </alternativeName>
</protein>
<gene>
    <name evidence="1" type="primary">atpC</name>
    <name type="ordered locus">SaurJH9_2138</name>
</gene>
<accession>A5IUP7</accession>
<reference key="1">
    <citation type="submission" date="2007-05" db="EMBL/GenBank/DDBJ databases">
        <title>Complete sequence of chromosome of Staphylococcus aureus subsp. aureus JH9.</title>
        <authorList>
            <consortium name="US DOE Joint Genome Institute"/>
            <person name="Copeland A."/>
            <person name="Lucas S."/>
            <person name="Lapidus A."/>
            <person name="Barry K."/>
            <person name="Detter J.C."/>
            <person name="Glavina del Rio T."/>
            <person name="Hammon N."/>
            <person name="Israni S."/>
            <person name="Pitluck S."/>
            <person name="Chain P."/>
            <person name="Malfatti S."/>
            <person name="Shin M."/>
            <person name="Vergez L."/>
            <person name="Schmutz J."/>
            <person name="Larimer F."/>
            <person name="Land M."/>
            <person name="Hauser L."/>
            <person name="Kyrpides N."/>
            <person name="Kim E."/>
            <person name="Tomasz A."/>
            <person name="Richardson P."/>
        </authorList>
    </citation>
    <scope>NUCLEOTIDE SEQUENCE [LARGE SCALE GENOMIC DNA]</scope>
    <source>
        <strain>JH9</strain>
    </source>
</reference>
<evidence type="ECO:0000255" key="1">
    <source>
        <dbReference type="HAMAP-Rule" id="MF_00530"/>
    </source>
</evidence>
<sequence length="134" mass="14844">MNTLNLDIVTPNGSVYNRDNVELVVMQTTAGEIGVMSGHIPTVAALKTGFVKVKFHDGTEYIAVSDGFVEVRKDKVSIIVQTAETAREIDVERAKLAKARAESHLENDDDNTDIHRAERALERANNRLRVAELK</sequence>
<feature type="chain" id="PRO_1000081750" description="ATP synthase epsilon chain">
    <location>
        <begin position="1"/>
        <end position="134"/>
    </location>
</feature>
<name>ATPE_STAA9</name>
<keyword id="KW-0066">ATP synthesis</keyword>
<keyword id="KW-1003">Cell membrane</keyword>
<keyword id="KW-0139">CF(1)</keyword>
<keyword id="KW-0375">Hydrogen ion transport</keyword>
<keyword id="KW-0406">Ion transport</keyword>
<keyword id="KW-0472">Membrane</keyword>
<keyword id="KW-0813">Transport</keyword>
<dbReference type="EMBL" id="CP000703">
    <property type="protein sequence ID" value="ABQ49920.1"/>
    <property type="molecule type" value="Genomic_DNA"/>
</dbReference>
<dbReference type="RefSeq" id="WP_001094394.1">
    <property type="nucleotide sequence ID" value="NC_009487.1"/>
</dbReference>
<dbReference type="SMR" id="A5IUP7"/>
<dbReference type="KEGG" id="saj:SaurJH9_2138"/>
<dbReference type="HOGENOM" id="CLU_084338_1_3_9"/>
<dbReference type="GO" id="GO:0005886">
    <property type="term" value="C:plasma membrane"/>
    <property type="evidence" value="ECO:0007669"/>
    <property type="project" value="UniProtKB-SubCell"/>
</dbReference>
<dbReference type="GO" id="GO:0045259">
    <property type="term" value="C:proton-transporting ATP synthase complex"/>
    <property type="evidence" value="ECO:0007669"/>
    <property type="project" value="UniProtKB-KW"/>
</dbReference>
<dbReference type="GO" id="GO:0005524">
    <property type="term" value="F:ATP binding"/>
    <property type="evidence" value="ECO:0007669"/>
    <property type="project" value="UniProtKB-UniRule"/>
</dbReference>
<dbReference type="GO" id="GO:0046933">
    <property type="term" value="F:proton-transporting ATP synthase activity, rotational mechanism"/>
    <property type="evidence" value="ECO:0007669"/>
    <property type="project" value="UniProtKB-UniRule"/>
</dbReference>
<dbReference type="CDD" id="cd12152">
    <property type="entry name" value="F1-ATPase_delta"/>
    <property type="match status" value="1"/>
</dbReference>
<dbReference type="FunFam" id="1.20.5.440:FF:000001">
    <property type="entry name" value="ATP synthase epsilon chain"/>
    <property type="match status" value="1"/>
</dbReference>
<dbReference type="FunFam" id="2.60.15.10:FF:000001">
    <property type="entry name" value="ATP synthase epsilon chain"/>
    <property type="match status" value="1"/>
</dbReference>
<dbReference type="Gene3D" id="1.20.5.440">
    <property type="entry name" value="ATP synthase delta/epsilon subunit, C-terminal domain"/>
    <property type="match status" value="1"/>
</dbReference>
<dbReference type="Gene3D" id="2.60.15.10">
    <property type="entry name" value="F0F1 ATP synthase delta/epsilon subunit, N-terminal"/>
    <property type="match status" value="1"/>
</dbReference>
<dbReference type="HAMAP" id="MF_00530">
    <property type="entry name" value="ATP_synth_epsil_bac"/>
    <property type="match status" value="1"/>
</dbReference>
<dbReference type="InterPro" id="IPR036794">
    <property type="entry name" value="ATP_F1_dsu/esu_C_sf"/>
</dbReference>
<dbReference type="InterPro" id="IPR001469">
    <property type="entry name" value="ATP_synth_F1_dsu/esu"/>
</dbReference>
<dbReference type="InterPro" id="IPR020546">
    <property type="entry name" value="ATP_synth_F1_dsu/esu_N"/>
</dbReference>
<dbReference type="InterPro" id="IPR020547">
    <property type="entry name" value="ATP_synth_F1_esu_C"/>
</dbReference>
<dbReference type="InterPro" id="IPR036771">
    <property type="entry name" value="ATPsynth_dsu/esu_N"/>
</dbReference>
<dbReference type="NCBIfam" id="TIGR01216">
    <property type="entry name" value="ATP_synt_epsi"/>
    <property type="match status" value="1"/>
</dbReference>
<dbReference type="NCBIfam" id="NF001846">
    <property type="entry name" value="PRK00571.1-3"/>
    <property type="match status" value="1"/>
</dbReference>
<dbReference type="NCBIfam" id="NF009980">
    <property type="entry name" value="PRK13446.1"/>
    <property type="match status" value="1"/>
</dbReference>
<dbReference type="PANTHER" id="PTHR13822">
    <property type="entry name" value="ATP SYNTHASE DELTA/EPSILON CHAIN"/>
    <property type="match status" value="1"/>
</dbReference>
<dbReference type="PANTHER" id="PTHR13822:SF10">
    <property type="entry name" value="ATP SYNTHASE EPSILON CHAIN, CHLOROPLASTIC"/>
    <property type="match status" value="1"/>
</dbReference>
<dbReference type="Pfam" id="PF00401">
    <property type="entry name" value="ATP-synt_DE"/>
    <property type="match status" value="1"/>
</dbReference>
<dbReference type="Pfam" id="PF02823">
    <property type="entry name" value="ATP-synt_DE_N"/>
    <property type="match status" value="1"/>
</dbReference>
<dbReference type="SUPFAM" id="SSF46604">
    <property type="entry name" value="Epsilon subunit of F1F0-ATP synthase C-terminal domain"/>
    <property type="match status" value="1"/>
</dbReference>
<dbReference type="SUPFAM" id="SSF51344">
    <property type="entry name" value="Epsilon subunit of F1F0-ATP synthase N-terminal domain"/>
    <property type="match status" value="1"/>
</dbReference>